<name>RL4_CARHZ</name>
<keyword id="KW-1185">Reference proteome</keyword>
<keyword id="KW-0687">Ribonucleoprotein</keyword>
<keyword id="KW-0689">Ribosomal protein</keyword>
<keyword id="KW-0694">RNA-binding</keyword>
<keyword id="KW-0699">rRNA-binding</keyword>
<gene>
    <name evidence="1" type="primary">rplD</name>
    <name type="ordered locus">CHY_2308</name>
</gene>
<reference key="1">
    <citation type="journal article" date="2005" name="PLoS Genet.">
        <title>Life in hot carbon monoxide: the complete genome sequence of Carboxydothermus hydrogenoformans Z-2901.</title>
        <authorList>
            <person name="Wu M."/>
            <person name="Ren Q."/>
            <person name="Durkin A.S."/>
            <person name="Daugherty S.C."/>
            <person name="Brinkac L.M."/>
            <person name="Dodson R.J."/>
            <person name="Madupu R."/>
            <person name="Sullivan S.A."/>
            <person name="Kolonay J.F."/>
            <person name="Nelson W.C."/>
            <person name="Tallon L.J."/>
            <person name="Jones K.M."/>
            <person name="Ulrich L.E."/>
            <person name="Gonzalez J.M."/>
            <person name="Zhulin I.B."/>
            <person name="Robb F.T."/>
            <person name="Eisen J.A."/>
        </authorList>
    </citation>
    <scope>NUCLEOTIDE SEQUENCE [LARGE SCALE GENOMIC DNA]</scope>
    <source>
        <strain>ATCC BAA-161 / DSM 6008 / Z-2901</strain>
    </source>
</reference>
<feature type="chain" id="PRO_0000242357" description="Large ribosomal subunit protein uL4">
    <location>
        <begin position="1"/>
        <end position="206"/>
    </location>
</feature>
<feature type="region of interest" description="Disordered" evidence="2">
    <location>
        <begin position="47"/>
        <end position="77"/>
    </location>
</feature>
<feature type="compositionally biased region" description="Basic residues" evidence="2">
    <location>
        <begin position="63"/>
        <end position="77"/>
    </location>
</feature>
<dbReference type="EMBL" id="CP000141">
    <property type="protein sequence ID" value="ABB14342.1"/>
    <property type="molecule type" value="Genomic_DNA"/>
</dbReference>
<dbReference type="RefSeq" id="WP_011345190.1">
    <property type="nucleotide sequence ID" value="NC_007503.1"/>
</dbReference>
<dbReference type="SMR" id="Q3A9R7"/>
<dbReference type="FunCoup" id="Q3A9R7">
    <property type="interactions" value="447"/>
</dbReference>
<dbReference type="STRING" id="246194.CHY_2308"/>
<dbReference type="KEGG" id="chy:CHY_2308"/>
<dbReference type="eggNOG" id="COG0088">
    <property type="taxonomic scope" value="Bacteria"/>
</dbReference>
<dbReference type="HOGENOM" id="CLU_041575_5_2_9"/>
<dbReference type="InParanoid" id="Q3A9R7"/>
<dbReference type="OrthoDB" id="9803201at2"/>
<dbReference type="Proteomes" id="UP000002706">
    <property type="component" value="Chromosome"/>
</dbReference>
<dbReference type="GO" id="GO:1990904">
    <property type="term" value="C:ribonucleoprotein complex"/>
    <property type="evidence" value="ECO:0007669"/>
    <property type="project" value="UniProtKB-KW"/>
</dbReference>
<dbReference type="GO" id="GO:0005840">
    <property type="term" value="C:ribosome"/>
    <property type="evidence" value="ECO:0007669"/>
    <property type="project" value="UniProtKB-KW"/>
</dbReference>
<dbReference type="GO" id="GO:0019843">
    <property type="term" value="F:rRNA binding"/>
    <property type="evidence" value="ECO:0007669"/>
    <property type="project" value="UniProtKB-UniRule"/>
</dbReference>
<dbReference type="GO" id="GO:0003735">
    <property type="term" value="F:structural constituent of ribosome"/>
    <property type="evidence" value="ECO:0007669"/>
    <property type="project" value="InterPro"/>
</dbReference>
<dbReference type="GO" id="GO:0006412">
    <property type="term" value="P:translation"/>
    <property type="evidence" value="ECO:0007669"/>
    <property type="project" value="UniProtKB-UniRule"/>
</dbReference>
<dbReference type="Gene3D" id="3.40.1370.10">
    <property type="match status" value="1"/>
</dbReference>
<dbReference type="HAMAP" id="MF_01328_B">
    <property type="entry name" value="Ribosomal_uL4_B"/>
    <property type="match status" value="1"/>
</dbReference>
<dbReference type="InterPro" id="IPR002136">
    <property type="entry name" value="Ribosomal_uL4"/>
</dbReference>
<dbReference type="InterPro" id="IPR013005">
    <property type="entry name" value="Ribosomal_uL4-like"/>
</dbReference>
<dbReference type="InterPro" id="IPR023574">
    <property type="entry name" value="Ribosomal_uL4_dom_sf"/>
</dbReference>
<dbReference type="NCBIfam" id="TIGR03953">
    <property type="entry name" value="rplD_bact"/>
    <property type="match status" value="1"/>
</dbReference>
<dbReference type="PANTHER" id="PTHR10746">
    <property type="entry name" value="50S RIBOSOMAL PROTEIN L4"/>
    <property type="match status" value="1"/>
</dbReference>
<dbReference type="PANTHER" id="PTHR10746:SF6">
    <property type="entry name" value="LARGE RIBOSOMAL SUBUNIT PROTEIN UL4M"/>
    <property type="match status" value="1"/>
</dbReference>
<dbReference type="Pfam" id="PF00573">
    <property type="entry name" value="Ribosomal_L4"/>
    <property type="match status" value="1"/>
</dbReference>
<dbReference type="SUPFAM" id="SSF52166">
    <property type="entry name" value="Ribosomal protein L4"/>
    <property type="match status" value="1"/>
</dbReference>
<protein>
    <recommendedName>
        <fullName evidence="1">Large ribosomal subunit protein uL4</fullName>
    </recommendedName>
    <alternativeName>
        <fullName evidence="3">50S ribosomal protein L4</fullName>
    </alternativeName>
</protein>
<comment type="function">
    <text evidence="1">One of the primary rRNA binding proteins, this protein initially binds near the 5'-end of the 23S rRNA. It is important during the early stages of 50S assembly. It makes multiple contacts with different domains of the 23S rRNA in the assembled 50S subunit and ribosome.</text>
</comment>
<comment type="function">
    <text evidence="1">Forms part of the polypeptide exit tunnel.</text>
</comment>
<comment type="subunit">
    <text evidence="1">Part of the 50S ribosomal subunit.</text>
</comment>
<comment type="similarity">
    <text evidence="1">Belongs to the universal ribosomal protein uL4 family.</text>
</comment>
<accession>Q3A9R7</accession>
<proteinExistence type="inferred from homology"/>
<evidence type="ECO:0000255" key="1">
    <source>
        <dbReference type="HAMAP-Rule" id="MF_01328"/>
    </source>
</evidence>
<evidence type="ECO:0000256" key="2">
    <source>
        <dbReference type="SAM" id="MobiDB-lite"/>
    </source>
</evidence>
<evidence type="ECO:0000305" key="3"/>
<organism>
    <name type="scientific">Carboxydothermus hydrogenoformans (strain ATCC BAA-161 / DSM 6008 / Z-2901)</name>
    <dbReference type="NCBI Taxonomy" id="246194"/>
    <lineage>
        <taxon>Bacteria</taxon>
        <taxon>Bacillati</taxon>
        <taxon>Bacillota</taxon>
        <taxon>Clostridia</taxon>
        <taxon>Thermoanaerobacterales</taxon>
        <taxon>Thermoanaerobacteraceae</taxon>
        <taxon>Carboxydothermus</taxon>
    </lineage>
</organism>
<sequence length="206" mass="22764">MPKVPVYNMEGAQVGEIELKDEIFGAPVNKAVLYEVSLMYLANQRRGTHDTKTRGEVSGGGRKPWRQKGTGRARHGSIRSPLWRKGGIVFGPHPRDYSYSVPKKVRRAALKSALSDKVNENNLIVVDSLTFAAPKTKEMIRVLNNLKVNGKTLIVTAGYDEIVEKSARNIPGVSVMTAPSLNALSLLNHDKLIMTRDAVLKVEEVF</sequence>